<keyword id="KW-1185">Reference proteome</keyword>
<proteinExistence type="inferred from homology"/>
<protein>
    <recommendedName>
        <fullName evidence="1">UPF0301 protein CC_3395</fullName>
    </recommendedName>
</protein>
<dbReference type="EMBL" id="AE005673">
    <property type="protein sequence ID" value="AAK25357.1"/>
    <property type="molecule type" value="Genomic_DNA"/>
</dbReference>
<dbReference type="PIR" id="A87670">
    <property type="entry name" value="A87670"/>
</dbReference>
<dbReference type="RefSeq" id="NP_422189.1">
    <property type="nucleotide sequence ID" value="NC_002696.2"/>
</dbReference>
<dbReference type="RefSeq" id="WP_010921224.1">
    <property type="nucleotide sequence ID" value="NC_002696.2"/>
</dbReference>
<dbReference type="SMR" id="Q9A311"/>
<dbReference type="STRING" id="190650.CC_3395"/>
<dbReference type="EnsemblBacteria" id="AAK25357">
    <property type="protein sequence ID" value="AAK25357"/>
    <property type="gene ID" value="CC_3395"/>
</dbReference>
<dbReference type="KEGG" id="ccr:CC_3395"/>
<dbReference type="PATRIC" id="fig|190650.5.peg.3402"/>
<dbReference type="eggNOG" id="COG1678">
    <property type="taxonomic scope" value="Bacteria"/>
</dbReference>
<dbReference type="HOGENOM" id="CLU_057596_1_0_5"/>
<dbReference type="BioCyc" id="CAULO:CC3395-MONOMER"/>
<dbReference type="Proteomes" id="UP000001816">
    <property type="component" value="Chromosome"/>
</dbReference>
<dbReference type="GO" id="GO:0005829">
    <property type="term" value="C:cytosol"/>
    <property type="evidence" value="ECO:0007669"/>
    <property type="project" value="TreeGrafter"/>
</dbReference>
<dbReference type="Gene3D" id="3.40.1740.10">
    <property type="entry name" value="VC0467-like"/>
    <property type="match status" value="1"/>
</dbReference>
<dbReference type="HAMAP" id="MF_00758">
    <property type="entry name" value="UPF0301"/>
    <property type="match status" value="1"/>
</dbReference>
<dbReference type="InterPro" id="IPR003774">
    <property type="entry name" value="AlgH-like"/>
</dbReference>
<dbReference type="PANTHER" id="PTHR30327">
    <property type="entry name" value="UNCHARACTERIZED PROTEIN YQGE"/>
    <property type="match status" value="1"/>
</dbReference>
<dbReference type="PANTHER" id="PTHR30327:SF1">
    <property type="entry name" value="UPF0301 PROTEIN YQGE"/>
    <property type="match status" value="1"/>
</dbReference>
<dbReference type="Pfam" id="PF02622">
    <property type="entry name" value="DUF179"/>
    <property type="match status" value="1"/>
</dbReference>
<dbReference type="SUPFAM" id="SSF143456">
    <property type="entry name" value="VC0467-like"/>
    <property type="match status" value="1"/>
</dbReference>
<reference key="1">
    <citation type="journal article" date="2001" name="Proc. Natl. Acad. Sci. U.S.A.">
        <title>Complete genome sequence of Caulobacter crescentus.</title>
        <authorList>
            <person name="Nierman W.C."/>
            <person name="Feldblyum T.V."/>
            <person name="Laub M.T."/>
            <person name="Paulsen I.T."/>
            <person name="Nelson K.E."/>
            <person name="Eisen J.A."/>
            <person name="Heidelberg J.F."/>
            <person name="Alley M.R.K."/>
            <person name="Ohta N."/>
            <person name="Maddock J.R."/>
            <person name="Potocka I."/>
            <person name="Nelson W.C."/>
            <person name="Newton A."/>
            <person name="Stephens C."/>
            <person name="Phadke N.D."/>
            <person name="Ely B."/>
            <person name="DeBoy R.T."/>
            <person name="Dodson R.J."/>
            <person name="Durkin A.S."/>
            <person name="Gwinn M.L."/>
            <person name="Haft D.H."/>
            <person name="Kolonay J.F."/>
            <person name="Smit J."/>
            <person name="Craven M.B."/>
            <person name="Khouri H.M."/>
            <person name="Shetty J."/>
            <person name="Berry K.J."/>
            <person name="Utterback T.R."/>
            <person name="Tran K."/>
            <person name="Wolf A.M."/>
            <person name="Vamathevan J.J."/>
            <person name="Ermolaeva M.D."/>
            <person name="White O."/>
            <person name="Salzberg S.L."/>
            <person name="Venter J.C."/>
            <person name="Shapiro L."/>
            <person name="Fraser C.M."/>
        </authorList>
    </citation>
    <scope>NUCLEOTIDE SEQUENCE [LARGE SCALE GENOMIC DNA]</scope>
    <source>
        <strain>ATCC 19089 / CIP 103742 / CB 15</strain>
    </source>
</reference>
<name>Y3395_CAUVC</name>
<organism>
    <name type="scientific">Caulobacter vibrioides (strain ATCC 19089 / CIP 103742 / CB 15)</name>
    <name type="common">Caulobacter crescentus</name>
    <dbReference type="NCBI Taxonomy" id="190650"/>
    <lineage>
        <taxon>Bacteria</taxon>
        <taxon>Pseudomonadati</taxon>
        <taxon>Pseudomonadota</taxon>
        <taxon>Alphaproteobacteria</taxon>
        <taxon>Caulobacterales</taxon>
        <taxon>Caulobacteraceae</taxon>
        <taxon>Caulobacter</taxon>
    </lineage>
</organism>
<feature type="chain" id="PRO_0000214314" description="UPF0301 protein CC_3395">
    <location>
        <begin position="1"/>
        <end position="195"/>
    </location>
</feature>
<gene>
    <name type="ordered locus">CC_3395</name>
</gene>
<comment type="similarity">
    <text evidence="1">Belongs to the UPF0301 (AlgH) family.</text>
</comment>
<evidence type="ECO:0000255" key="1">
    <source>
        <dbReference type="HAMAP-Rule" id="MF_00758"/>
    </source>
</evidence>
<accession>Q9A311</accession>
<sequence length="195" mass="21188">MASLIDDDDGEFLIGRLLVAMPGIEDPRFERTVLYLCAHDEDAAMGLAVNRPVEGLTVFELLNRLGVRSEIQAPSDLVLLGGPLERERGFVLHTDDFSSPDSTLPVADGVALTATRDALDAMASAIKRPRKSLLALGYAGWGPGQLEQELRDNVWLICDADEGLLFDEDHEHKWTRALAKLGITADHLSATAGRA</sequence>